<comment type="function">
    <text evidence="1">Endonuclease that specifically degrades the RNA of RNA-DNA hybrids.</text>
</comment>
<comment type="catalytic activity">
    <reaction evidence="1">
        <text>Endonucleolytic cleavage to 5'-phosphomonoester.</text>
        <dbReference type="EC" id="3.1.26.4"/>
    </reaction>
</comment>
<comment type="cofactor">
    <cofactor evidence="1">
        <name>Mn(2+)</name>
        <dbReference type="ChEBI" id="CHEBI:29035"/>
    </cofactor>
    <cofactor evidence="1">
        <name>Mg(2+)</name>
        <dbReference type="ChEBI" id="CHEBI:18420"/>
    </cofactor>
    <text evidence="1">Manganese or magnesium. Binds 1 divalent metal ion per monomer in the absence of substrate. May bind a second metal ion after substrate binding.</text>
</comment>
<comment type="subcellular location">
    <subcellularLocation>
        <location evidence="1">Cytoplasm</location>
    </subcellularLocation>
</comment>
<comment type="similarity">
    <text evidence="1">Belongs to the RNase HII family.</text>
</comment>
<reference key="1">
    <citation type="journal article" date="2008" name="J. Bacteriol.">
        <title>The pangenome structure of Escherichia coli: comparative genomic analysis of E. coli commensal and pathogenic isolates.</title>
        <authorList>
            <person name="Rasko D.A."/>
            <person name="Rosovitz M.J."/>
            <person name="Myers G.S.A."/>
            <person name="Mongodin E.F."/>
            <person name="Fricke W.F."/>
            <person name="Gajer P."/>
            <person name="Crabtree J."/>
            <person name="Sebaihia M."/>
            <person name="Thomson N.R."/>
            <person name="Chaudhuri R."/>
            <person name="Henderson I.R."/>
            <person name="Sperandio V."/>
            <person name="Ravel J."/>
        </authorList>
    </citation>
    <scope>NUCLEOTIDE SEQUENCE [LARGE SCALE GENOMIC DNA]</scope>
    <source>
        <strain>HS</strain>
    </source>
</reference>
<name>RNH2_ECOHS</name>
<evidence type="ECO:0000255" key="1">
    <source>
        <dbReference type="HAMAP-Rule" id="MF_00052"/>
    </source>
</evidence>
<evidence type="ECO:0000255" key="2">
    <source>
        <dbReference type="PROSITE-ProRule" id="PRU01319"/>
    </source>
</evidence>
<gene>
    <name evidence="1" type="primary">rnhB</name>
    <name type="ordered locus">EcHS_A0185</name>
</gene>
<keyword id="KW-0963">Cytoplasm</keyword>
<keyword id="KW-0255">Endonuclease</keyword>
<keyword id="KW-0378">Hydrolase</keyword>
<keyword id="KW-0464">Manganese</keyword>
<keyword id="KW-0479">Metal-binding</keyword>
<keyword id="KW-0540">Nuclease</keyword>
<protein>
    <recommendedName>
        <fullName evidence="1">Ribonuclease HII</fullName>
        <shortName evidence="1">RNase HII</shortName>
        <ecNumber evidence="1">3.1.26.4</ecNumber>
    </recommendedName>
</protein>
<feature type="chain" id="PRO_1000057377" description="Ribonuclease HII">
    <location>
        <begin position="1"/>
        <end position="198"/>
    </location>
</feature>
<feature type="domain" description="RNase H type-2" evidence="2">
    <location>
        <begin position="10"/>
        <end position="198"/>
    </location>
</feature>
<feature type="binding site" evidence="1">
    <location>
        <position position="16"/>
    </location>
    <ligand>
        <name>a divalent metal cation</name>
        <dbReference type="ChEBI" id="CHEBI:60240"/>
    </ligand>
</feature>
<feature type="binding site" evidence="1">
    <location>
        <position position="17"/>
    </location>
    <ligand>
        <name>a divalent metal cation</name>
        <dbReference type="ChEBI" id="CHEBI:60240"/>
    </ligand>
</feature>
<feature type="binding site" evidence="1">
    <location>
        <position position="108"/>
    </location>
    <ligand>
        <name>a divalent metal cation</name>
        <dbReference type="ChEBI" id="CHEBI:60240"/>
    </ligand>
</feature>
<proteinExistence type="inferred from homology"/>
<dbReference type="EC" id="3.1.26.4" evidence="1"/>
<dbReference type="EMBL" id="CP000802">
    <property type="protein sequence ID" value="ABV04583.1"/>
    <property type="molecule type" value="Genomic_DNA"/>
</dbReference>
<dbReference type="RefSeq" id="WP_000569430.1">
    <property type="nucleotide sequence ID" value="NC_009800.1"/>
</dbReference>
<dbReference type="SMR" id="A7ZWC9"/>
<dbReference type="GeneID" id="93777242"/>
<dbReference type="KEGG" id="ecx:EcHS_A0185"/>
<dbReference type="HOGENOM" id="CLU_036532_3_2_6"/>
<dbReference type="GO" id="GO:0005737">
    <property type="term" value="C:cytoplasm"/>
    <property type="evidence" value="ECO:0007669"/>
    <property type="project" value="UniProtKB-SubCell"/>
</dbReference>
<dbReference type="GO" id="GO:0032299">
    <property type="term" value="C:ribonuclease H2 complex"/>
    <property type="evidence" value="ECO:0007669"/>
    <property type="project" value="TreeGrafter"/>
</dbReference>
<dbReference type="GO" id="GO:0030145">
    <property type="term" value="F:manganese ion binding"/>
    <property type="evidence" value="ECO:0007669"/>
    <property type="project" value="UniProtKB-UniRule"/>
</dbReference>
<dbReference type="GO" id="GO:0003723">
    <property type="term" value="F:RNA binding"/>
    <property type="evidence" value="ECO:0007669"/>
    <property type="project" value="InterPro"/>
</dbReference>
<dbReference type="GO" id="GO:0004523">
    <property type="term" value="F:RNA-DNA hybrid ribonuclease activity"/>
    <property type="evidence" value="ECO:0007669"/>
    <property type="project" value="UniProtKB-UniRule"/>
</dbReference>
<dbReference type="GO" id="GO:0043137">
    <property type="term" value="P:DNA replication, removal of RNA primer"/>
    <property type="evidence" value="ECO:0007669"/>
    <property type="project" value="TreeGrafter"/>
</dbReference>
<dbReference type="GO" id="GO:0006298">
    <property type="term" value="P:mismatch repair"/>
    <property type="evidence" value="ECO:0007669"/>
    <property type="project" value="TreeGrafter"/>
</dbReference>
<dbReference type="CDD" id="cd07182">
    <property type="entry name" value="RNase_HII_bacteria_HII_like"/>
    <property type="match status" value="1"/>
</dbReference>
<dbReference type="FunFam" id="3.30.420.10:FF:000006">
    <property type="entry name" value="Ribonuclease HII"/>
    <property type="match status" value="1"/>
</dbReference>
<dbReference type="Gene3D" id="3.30.420.10">
    <property type="entry name" value="Ribonuclease H-like superfamily/Ribonuclease H"/>
    <property type="match status" value="1"/>
</dbReference>
<dbReference type="HAMAP" id="MF_00052_B">
    <property type="entry name" value="RNase_HII_B"/>
    <property type="match status" value="1"/>
</dbReference>
<dbReference type="InterPro" id="IPR022898">
    <property type="entry name" value="RNase_HII"/>
</dbReference>
<dbReference type="InterPro" id="IPR001352">
    <property type="entry name" value="RNase_HII/HIII"/>
</dbReference>
<dbReference type="InterPro" id="IPR024567">
    <property type="entry name" value="RNase_HII/HIII_dom"/>
</dbReference>
<dbReference type="InterPro" id="IPR012337">
    <property type="entry name" value="RNaseH-like_sf"/>
</dbReference>
<dbReference type="InterPro" id="IPR036397">
    <property type="entry name" value="RNaseH_sf"/>
</dbReference>
<dbReference type="NCBIfam" id="NF000594">
    <property type="entry name" value="PRK00015.1-1"/>
    <property type="match status" value="1"/>
</dbReference>
<dbReference type="NCBIfam" id="NF000595">
    <property type="entry name" value="PRK00015.1-3"/>
    <property type="match status" value="1"/>
</dbReference>
<dbReference type="NCBIfam" id="NF000596">
    <property type="entry name" value="PRK00015.1-4"/>
    <property type="match status" value="1"/>
</dbReference>
<dbReference type="PANTHER" id="PTHR10954">
    <property type="entry name" value="RIBONUCLEASE H2 SUBUNIT A"/>
    <property type="match status" value="1"/>
</dbReference>
<dbReference type="PANTHER" id="PTHR10954:SF18">
    <property type="entry name" value="RIBONUCLEASE HII"/>
    <property type="match status" value="1"/>
</dbReference>
<dbReference type="Pfam" id="PF01351">
    <property type="entry name" value="RNase_HII"/>
    <property type="match status" value="1"/>
</dbReference>
<dbReference type="SUPFAM" id="SSF53098">
    <property type="entry name" value="Ribonuclease H-like"/>
    <property type="match status" value="1"/>
</dbReference>
<dbReference type="PROSITE" id="PS51975">
    <property type="entry name" value="RNASE_H_2"/>
    <property type="match status" value="1"/>
</dbReference>
<sequence length="198" mass="21526">MIEFVYPHTQLVAGVDEVGRGPLVGAVVTAAVILDPARPIAGLNDSKKLSEKRRLALYEEIKEKALSWSLGRAEPHEIDELNILHATMLAMQRAVAGLHIAPEYVLIDGNRCPKLPMPAMAVVKGDSRVPEISAASILAKVTRDAEMAALDIVFPQYGFAQHKGYPTAFHLEKLAEHGATEHHRRSFGPVKRALGLAS</sequence>
<accession>A7ZWC9</accession>
<organism>
    <name type="scientific">Escherichia coli O9:H4 (strain HS)</name>
    <dbReference type="NCBI Taxonomy" id="331112"/>
    <lineage>
        <taxon>Bacteria</taxon>
        <taxon>Pseudomonadati</taxon>
        <taxon>Pseudomonadota</taxon>
        <taxon>Gammaproteobacteria</taxon>
        <taxon>Enterobacterales</taxon>
        <taxon>Enterobacteriaceae</taxon>
        <taxon>Escherichia</taxon>
    </lineage>
</organism>